<sequence>MAEQESLEFGKADFVLMDTVSMPEFMANLRLRFEKGRIYTFIGEVVVSVNPYKALNIYGRDTIEQYKGRELYERPPHLFAIADAAYKAMKRRSKDTCIVISGESGAGKTEASKYIMQYIAAITNPSQRAEVERVKNMLLKSNCVLEAFGNAKTNRNDNSSRFGKYMDINFDFKGDPIGGHINNYLLEKSRVIVQQPGERSFHSFYQLLQGGSEQMLRSLHLQKSLSSYNYIHVGAQLKSSINDAAEFKVVADAMKVIGFKPEETQTVYKILAAILHLGNLKFMVDGDTPLIENGKVVSIIAELLSTKTDMVEKALLYRTVATGRDIIDKQHTEQEASYGRDAFAKAIYERLFCWIVTRINDIIEVKNYDTTIHGKNTVIGVLDIYGFEIFDNNSFEQFCINYCNEKLQQLFIQLVLKQEQEEYQREGIPWKHIDYFNNQIIVDLVEQQHKGIIAILDDACMNVGKVTDEMFLEALNSKLGKHGHFSSRKLCASDKILEFDRDFRIRHYAGDVVYSVIGFIDKNKDTLFQDFKRLLYNSSNPVLKNMWPEGKLSITEVTKRPLTAATLFKNSMIALVDNLASKEPYYVRCIKPNDKKSPQIFDDERCRHQVEYLGLLENVRVRRAGFAFRQTYEKFLHRYKMISEFTWPNHDLPSDKEAVKKLIEHCGFQDDVAYGKTKIFIRTPRTLFTLEELRAQMLIRIVLFLQKVWRGTLARMRYKRTKAALTIIRYYRHYKVKSYIQEVARRFHGVKTMKDHGKHVKWPTPPKVLRRFEEALQAIFNRWRASQLIKSLPASDLPQVRAKVAAMEMLKGQRADLGLQRAWEGNYLASKPDTPQTSGTFVPVANELKRKDKYMNVLFSCHVRKVNRFSKVEDRAIFVTDRHLYKMDPTKQYKVMKTIPLYNLTGLSVSNGKDQLVVFHTKDNKDLIVCLFSKQPTHESRIGELVGVLVNHFKSEKRHLQVNVTNPVQCSLHGKKCTVSVETRLNQPEPDFTKNRSGFILSVPGN</sequence>
<accession>F1PRN2</accession>
<dbReference type="EMBL" id="AAEX03006641">
    <property type="status" value="NOT_ANNOTATED_CDS"/>
    <property type="molecule type" value="Genomic_DNA"/>
</dbReference>
<dbReference type="EMBL" id="AAEX03006642">
    <property type="status" value="NOT_ANNOTATED_CDS"/>
    <property type="molecule type" value="Genomic_DNA"/>
</dbReference>
<dbReference type="RefSeq" id="XP_038404069.1">
    <property type="nucleotide sequence ID" value="XM_038548141.1"/>
</dbReference>
<dbReference type="RefSeq" id="XP_038533283.1">
    <property type="nucleotide sequence ID" value="XM_038677355.1"/>
</dbReference>
<dbReference type="RefSeq" id="XP_548273.3">
    <property type="nucleotide sequence ID" value="XM_548273.7"/>
</dbReference>
<dbReference type="SMR" id="F1PRN2"/>
<dbReference type="FunCoup" id="F1PRN2">
    <property type="interactions" value="606"/>
</dbReference>
<dbReference type="STRING" id="9615.ENSCAFP00000064257"/>
<dbReference type="PaxDb" id="9612-ENSCAFP00000027140"/>
<dbReference type="Ensembl" id="ENSCAFT00000107115.1">
    <property type="protein sequence ID" value="ENSCAFP00000068611.1"/>
    <property type="gene ID" value="ENSCAFG00000018370.5"/>
</dbReference>
<dbReference type="Ensembl" id="ENSCAFT00030030180.1">
    <property type="protein sequence ID" value="ENSCAFP00030026319.1"/>
    <property type="gene ID" value="ENSCAFG00030016064.1"/>
</dbReference>
<dbReference type="Ensembl" id="ENSCAFT00040021996.1">
    <property type="protein sequence ID" value="ENSCAFP00040019081.1"/>
    <property type="gene ID" value="ENSCAFG00040011926.1"/>
</dbReference>
<dbReference type="Ensembl" id="ENSCAFT00845020951.1">
    <property type="protein sequence ID" value="ENSCAFP00845016461.1"/>
    <property type="gene ID" value="ENSCAFG00845011784.1"/>
</dbReference>
<dbReference type="GeneID" id="491153"/>
<dbReference type="KEGG" id="cfa:491153"/>
<dbReference type="CTD" id="4642"/>
<dbReference type="VEuPathDB" id="HostDB:ENSCAFG00845011784"/>
<dbReference type="VGNC" id="VGNC:43563">
    <property type="gene designation" value="MYO1D"/>
</dbReference>
<dbReference type="eggNOG" id="KOG0164">
    <property type="taxonomic scope" value="Eukaryota"/>
</dbReference>
<dbReference type="GeneTree" id="ENSGT00940000157411"/>
<dbReference type="HOGENOM" id="CLU_000192_7_7_1"/>
<dbReference type="InParanoid" id="F1PRN2"/>
<dbReference type="OMA" id="SSCIEIF"/>
<dbReference type="OrthoDB" id="6108017at2759"/>
<dbReference type="TreeFam" id="TF312960"/>
<dbReference type="Proteomes" id="UP000002254">
    <property type="component" value="Chromosome 9"/>
</dbReference>
<dbReference type="Proteomes" id="UP000694429">
    <property type="component" value="Chromosome 9"/>
</dbReference>
<dbReference type="Proteomes" id="UP000694542">
    <property type="component" value="Chromosome 9"/>
</dbReference>
<dbReference type="Proteomes" id="UP000805418">
    <property type="component" value="Chromosome 9"/>
</dbReference>
<dbReference type="GO" id="GO:0015629">
    <property type="term" value="C:actin cytoskeleton"/>
    <property type="evidence" value="ECO:0000318"/>
    <property type="project" value="GO_Central"/>
</dbReference>
<dbReference type="GO" id="GO:0030424">
    <property type="term" value="C:axon"/>
    <property type="evidence" value="ECO:0007669"/>
    <property type="project" value="Ensembl"/>
</dbReference>
<dbReference type="GO" id="GO:0005903">
    <property type="term" value="C:brush border"/>
    <property type="evidence" value="ECO:0007669"/>
    <property type="project" value="Ensembl"/>
</dbReference>
<dbReference type="GO" id="GO:0005938">
    <property type="term" value="C:cell cortex"/>
    <property type="evidence" value="ECO:0007669"/>
    <property type="project" value="UniProtKB-SubCell"/>
</dbReference>
<dbReference type="GO" id="GO:0005737">
    <property type="term" value="C:cytoplasm"/>
    <property type="evidence" value="ECO:0000318"/>
    <property type="project" value="GO_Central"/>
</dbReference>
<dbReference type="GO" id="GO:0030425">
    <property type="term" value="C:dendrite"/>
    <property type="evidence" value="ECO:0007669"/>
    <property type="project" value="UniProtKB-SubCell"/>
</dbReference>
<dbReference type="GO" id="GO:0005769">
    <property type="term" value="C:early endosome"/>
    <property type="evidence" value="ECO:0007669"/>
    <property type="project" value="UniProtKB-SubCell"/>
</dbReference>
<dbReference type="GO" id="GO:0005768">
    <property type="term" value="C:endosome"/>
    <property type="evidence" value="ECO:0000314"/>
    <property type="project" value="UniProtKB"/>
</dbReference>
<dbReference type="GO" id="GO:0005902">
    <property type="term" value="C:microvillus"/>
    <property type="evidence" value="ECO:0000318"/>
    <property type="project" value="GO_Central"/>
</dbReference>
<dbReference type="GO" id="GO:0043209">
    <property type="term" value="C:myelin sheath"/>
    <property type="evidence" value="ECO:0007669"/>
    <property type="project" value="Ensembl"/>
</dbReference>
<dbReference type="GO" id="GO:0016459">
    <property type="term" value="C:myosin complex"/>
    <property type="evidence" value="ECO:0007669"/>
    <property type="project" value="UniProtKB-KW"/>
</dbReference>
<dbReference type="GO" id="GO:0043204">
    <property type="term" value="C:perikaryon"/>
    <property type="evidence" value="ECO:0007669"/>
    <property type="project" value="UniProtKB-SubCell"/>
</dbReference>
<dbReference type="GO" id="GO:0005886">
    <property type="term" value="C:plasma membrane"/>
    <property type="evidence" value="ECO:0000318"/>
    <property type="project" value="GO_Central"/>
</dbReference>
<dbReference type="GO" id="GO:0051015">
    <property type="term" value="F:actin filament binding"/>
    <property type="evidence" value="ECO:0000318"/>
    <property type="project" value="GO_Central"/>
</dbReference>
<dbReference type="GO" id="GO:0005524">
    <property type="term" value="F:ATP binding"/>
    <property type="evidence" value="ECO:0007669"/>
    <property type="project" value="UniProtKB-KW"/>
</dbReference>
<dbReference type="GO" id="GO:0005516">
    <property type="term" value="F:calmodulin binding"/>
    <property type="evidence" value="ECO:0007669"/>
    <property type="project" value="UniProtKB-KW"/>
</dbReference>
<dbReference type="GO" id="GO:0000146">
    <property type="term" value="F:microfilament motor activity"/>
    <property type="evidence" value="ECO:0000318"/>
    <property type="project" value="GO_Central"/>
</dbReference>
<dbReference type="GO" id="GO:0019904">
    <property type="term" value="F:protein domain specific binding"/>
    <property type="evidence" value="ECO:0007669"/>
    <property type="project" value="Ensembl"/>
</dbReference>
<dbReference type="GO" id="GO:0007015">
    <property type="term" value="P:actin filament organization"/>
    <property type="evidence" value="ECO:0000318"/>
    <property type="project" value="GO_Central"/>
</dbReference>
<dbReference type="GO" id="GO:0030048">
    <property type="term" value="P:actin filament-based movement"/>
    <property type="evidence" value="ECO:0000318"/>
    <property type="project" value="GO_Central"/>
</dbReference>
<dbReference type="GO" id="GO:0061502">
    <property type="term" value="P:early endosome to recycling endosome transport"/>
    <property type="evidence" value="ECO:0000314"/>
    <property type="project" value="UniProtKB"/>
</dbReference>
<dbReference type="GO" id="GO:0006897">
    <property type="term" value="P:endocytosis"/>
    <property type="evidence" value="ECO:0000318"/>
    <property type="project" value="GO_Central"/>
</dbReference>
<dbReference type="GO" id="GO:0015031">
    <property type="term" value="P:protein transport"/>
    <property type="evidence" value="ECO:0007669"/>
    <property type="project" value="UniProtKB-KW"/>
</dbReference>
<dbReference type="CDD" id="cd01378">
    <property type="entry name" value="MYSc_Myo1"/>
    <property type="match status" value="1"/>
</dbReference>
<dbReference type="FunFam" id="1.20.5.4820:FF:000003">
    <property type="entry name" value="Unconventional myosin ID"/>
    <property type="match status" value="1"/>
</dbReference>
<dbReference type="FunFam" id="1.20.58.530:FF:000004">
    <property type="entry name" value="Unconventional myosin ID"/>
    <property type="match status" value="1"/>
</dbReference>
<dbReference type="FunFam" id="1.20.120.720:FF:000009">
    <property type="entry name" value="Unconventional myosin-Id"/>
    <property type="match status" value="1"/>
</dbReference>
<dbReference type="FunFam" id="1.10.10.820:FF:000007">
    <property type="entry name" value="unconventional myosin-Id"/>
    <property type="match status" value="1"/>
</dbReference>
<dbReference type="Gene3D" id="1.10.10.820">
    <property type="match status" value="1"/>
</dbReference>
<dbReference type="Gene3D" id="1.20.5.4820">
    <property type="match status" value="1"/>
</dbReference>
<dbReference type="Gene3D" id="1.20.58.530">
    <property type="match status" value="1"/>
</dbReference>
<dbReference type="Gene3D" id="3.40.850.10">
    <property type="entry name" value="Kinesin motor domain"/>
    <property type="match status" value="1"/>
</dbReference>
<dbReference type="Gene3D" id="1.20.120.720">
    <property type="entry name" value="Myosin VI head, motor domain, U50 subdomain"/>
    <property type="match status" value="1"/>
</dbReference>
<dbReference type="InterPro" id="IPR000048">
    <property type="entry name" value="IQ_motif_EF-hand-BS"/>
</dbReference>
<dbReference type="InterPro" id="IPR036961">
    <property type="entry name" value="Kinesin_motor_dom_sf"/>
</dbReference>
<dbReference type="InterPro" id="IPR001609">
    <property type="entry name" value="Myosin_head_motor_dom-like"/>
</dbReference>
<dbReference type="InterPro" id="IPR010926">
    <property type="entry name" value="Myosin_TH1"/>
</dbReference>
<dbReference type="InterPro" id="IPR036072">
    <property type="entry name" value="MYSc_Myo1"/>
</dbReference>
<dbReference type="InterPro" id="IPR027417">
    <property type="entry name" value="P-loop_NTPase"/>
</dbReference>
<dbReference type="PANTHER" id="PTHR13140">
    <property type="entry name" value="MYOSIN"/>
    <property type="match status" value="1"/>
</dbReference>
<dbReference type="PANTHER" id="PTHR13140:SF417">
    <property type="entry name" value="UNCONVENTIONAL MYOSIN-ID"/>
    <property type="match status" value="1"/>
</dbReference>
<dbReference type="Pfam" id="PF00063">
    <property type="entry name" value="Myosin_head"/>
    <property type="match status" value="1"/>
</dbReference>
<dbReference type="Pfam" id="PF06017">
    <property type="entry name" value="Myosin_TH1"/>
    <property type="match status" value="1"/>
</dbReference>
<dbReference type="PRINTS" id="PR00193">
    <property type="entry name" value="MYOSINHEAVY"/>
</dbReference>
<dbReference type="SMART" id="SM00015">
    <property type="entry name" value="IQ"/>
    <property type="match status" value="1"/>
</dbReference>
<dbReference type="SMART" id="SM00242">
    <property type="entry name" value="MYSc"/>
    <property type="match status" value="1"/>
</dbReference>
<dbReference type="SUPFAM" id="SSF52540">
    <property type="entry name" value="P-loop containing nucleoside triphosphate hydrolases"/>
    <property type="match status" value="1"/>
</dbReference>
<dbReference type="PROSITE" id="PS50096">
    <property type="entry name" value="IQ"/>
    <property type="match status" value="1"/>
</dbReference>
<dbReference type="PROSITE" id="PS51456">
    <property type="entry name" value="MYOSIN_MOTOR"/>
    <property type="match status" value="1"/>
</dbReference>
<dbReference type="PROSITE" id="PS51757">
    <property type="entry name" value="TH1"/>
    <property type="match status" value="1"/>
</dbReference>
<feature type="initiator methionine" description="Removed" evidence="1">
    <location>
        <position position="1"/>
    </location>
</feature>
<feature type="chain" id="PRO_0000446321" description="Unconventional myosin-Id">
    <location>
        <begin position="2"/>
        <end position="1006"/>
    </location>
</feature>
<feature type="domain" description="Myosin motor" evidence="5">
    <location>
        <begin position="9"/>
        <end position="695"/>
    </location>
</feature>
<feature type="domain" description="IQ 1" evidence="4">
    <location>
        <begin position="699"/>
        <end position="719"/>
    </location>
</feature>
<feature type="domain" description="IQ 2" evidence="4">
    <location>
        <begin position="721"/>
        <end position="741"/>
    </location>
</feature>
<feature type="domain" description="TH1" evidence="6">
    <location>
        <begin position="812"/>
        <end position="1005"/>
    </location>
</feature>
<feature type="region of interest" description="Actin-binding" evidence="5">
    <location>
        <begin position="572"/>
        <end position="594"/>
    </location>
</feature>
<feature type="binding site" evidence="5">
    <location>
        <begin position="102"/>
        <end position="109"/>
    </location>
    <ligand>
        <name>ATP</name>
        <dbReference type="ChEBI" id="CHEBI:30616"/>
    </ligand>
</feature>
<feature type="modified residue" description="N-acetylalanine" evidence="1">
    <location>
        <position position="2"/>
    </location>
</feature>
<feature type="modified residue" description="Phosphoserine" evidence="1">
    <location>
        <position position="200"/>
    </location>
</feature>
<feature type="modified residue" description="Phosphotyrosine" evidence="2">
    <location>
        <position position="536"/>
    </location>
</feature>
<protein>
    <recommendedName>
        <fullName>Unconventional myosin-Id</fullName>
    </recommendedName>
    <alternativeName>
        <fullName evidence="8">Unconventional myosin Myr 4</fullName>
    </alternativeName>
</protein>
<reference key="1">
    <citation type="journal article" date="2005" name="Nature">
        <title>Genome sequence, comparative analysis and haplotype structure of the domestic dog.</title>
        <authorList>
            <person name="Lindblad-Toh K."/>
            <person name="Wade C.M."/>
            <person name="Mikkelsen T.S."/>
            <person name="Karlsson E.K."/>
            <person name="Jaffe D.B."/>
            <person name="Kamal M."/>
            <person name="Clamp M."/>
            <person name="Chang J.L."/>
            <person name="Kulbokas E.J. III"/>
            <person name="Zody M.C."/>
            <person name="Mauceli E."/>
            <person name="Xie X."/>
            <person name="Breen M."/>
            <person name="Wayne R.K."/>
            <person name="Ostrander E.A."/>
            <person name="Ponting C.P."/>
            <person name="Galibert F."/>
            <person name="Smith D.R."/>
            <person name="deJong P.J."/>
            <person name="Kirkness E.F."/>
            <person name="Alvarez P."/>
            <person name="Biagi T."/>
            <person name="Brockman W."/>
            <person name="Butler J."/>
            <person name="Chin C.-W."/>
            <person name="Cook A."/>
            <person name="Cuff J."/>
            <person name="Daly M.J."/>
            <person name="DeCaprio D."/>
            <person name="Gnerre S."/>
            <person name="Grabherr M."/>
            <person name="Kellis M."/>
            <person name="Kleber M."/>
            <person name="Bardeleben C."/>
            <person name="Goodstadt L."/>
            <person name="Heger A."/>
            <person name="Hitte C."/>
            <person name="Kim L."/>
            <person name="Koepfli K.-P."/>
            <person name="Parker H.G."/>
            <person name="Pollinger J.P."/>
            <person name="Searle S.M.J."/>
            <person name="Sutter N.B."/>
            <person name="Thomas R."/>
            <person name="Webber C."/>
            <person name="Baldwin J."/>
            <person name="Abebe A."/>
            <person name="Abouelleil A."/>
            <person name="Aftuck L."/>
            <person name="Ait-Zahra M."/>
            <person name="Aldredge T."/>
            <person name="Allen N."/>
            <person name="An P."/>
            <person name="Anderson S."/>
            <person name="Antoine C."/>
            <person name="Arachchi H."/>
            <person name="Aslam A."/>
            <person name="Ayotte L."/>
            <person name="Bachantsang P."/>
            <person name="Barry A."/>
            <person name="Bayul T."/>
            <person name="Benamara M."/>
            <person name="Berlin A."/>
            <person name="Bessette D."/>
            <person name="Blitshteyn B."/>
            <person name="Bloom T."/>
            <person name="Blye J."/>
            <person name="Boguslavskiy L."/>
            <person name="Bonnet C."/>
            <person name="Boukhgalter B."/>
            <person name="Brown A."/>
            <person name="Cahill P."/>
            <person name="Calixte N."/>
            <person name="Camarata J."/>
            <person name="Cheshatsang Y."/>
            <person name="Chu J."/>
            <person name="Citroen M."/>
            <person name="Collymore A."/>
            <person name="Cooke P."/>
            <person name="Dawoe T."/>
            <person name="Daza R."/>
            <person name="Decktor K."/>
            <person name="DeGray S."/>
            <person name="Dhargay N."/>
            <person name="Dooley K."/>
            <person name="Dooley K."/>
            <person name="Dorje P."/>
            <person name="Dorjee K."/>
            <person name="Dorris L."/>
            <person name="Duffey N."/>
            <person name="Dupes A."/>
            <person name="Egbiremolen O."/>
            <person name="Elong R."/>
            <person name="Falk J."/>
            <person name="Farina A."/>
            <person name="Faro S."/>
            <person name="Ferguson D."/>
            <person name="Ferreira P."/>
            <person name="Fisher S."/>
            <person name="FitzGerald M."/>
            <person name="Foley K."/>
            <person name="Foley C."/>
            <person name="Franke A."/>
            <person name="Friedrich D."/>
            <person name="Gage D."/>
            <person name="Garber M."/>
            <person name="Gearin G."/>
            <person name="Giannoukos G."/>
            <person name="Goode T."/>
            <person name="Goyette A."/>
            <person name="Graham J."/>
            <person name="Grandbois E."/>
            <person name="Gyaltsen K."/>
            <person name="Hafez N."/>
            <person name="Hagopian D."/>
            <person name="Hagos B."/>
            <person name="Hall J."/>
            <person name="Healy C."/>
            <person name="Hegarty R."/>
            <person name="Honan T."/>
            <person name="Horn A."/>
            <person name="Houde N."/>
            <person name="Hughes L."/>
            <person name="Hunnicutt L."/>
            <person name="Husby M."/>
            <person name="Jester B."/>
            <person name="Jones C."/>
            <person name="Kamat A."/>
            <person name="Kanga B."/>
            <person name="Kells C."/>
            <person name="Khazanovich D."/>
            <person name="Kieu A.C."/>
            <person name="Kisner P."/>
            <person name="Kumar M."/>
            <person name="Lance K."/>
            <person name="Landers T."/>
            <person name="Lara M."/>
            <person name="Lee W."/>
            <person name="Leger J.-P."/>
            <person name="Lennon N."/>
            <person name="Leuper L."/>
            <person name="LeVine S."/>
            <person name="Liu J."/>
            <person name="Liu X."/>
            <person name="Lokyitsang Y."/>
            <person name="Lokyitsang T."/>
            <person name="Lui A."/>
            <person name="Macdonald J."/>
            <person name="Major J."/>
            <person name="Marabella R."/>
            <person name="Maru K."/>
            <person name="Matthews C."/>
            <person name="McDonough S."/>
            <person name="Mehta T."/>
            <person name="Meldrim J."/>
            <person name="Melnikov A."/>
            <person name="Meneus L."/>
            <person name="Mihalev A."/>
            <person name="Mihova T."/>
            <person name="Miller K."/>
            <person name="Mittelman R."/>
            <person name="Mlenga V."/>
            <person name="Mulrain L."/>
            <person name="Munson G."/>
            <person name="Navidi A."/>
            <person name="Naylor J."/>
            <person name="Nguyen T."/>
            <person name="Nguyen N."/>
            <person name="Nguyen C."/>
            <person name="Nguyen T."/>
            <person name="Nicol R."/>
            <person name="Norbu N."/>
            <person name="Norbu C."/>
            <person name="Novod N."/>
            <person name="Nyima T."/>
            <person name="Olandt P."/>
            <person name="O'Neill B."/>
            <person name="O'Neill K."/>
            <person name="Osman S."/>
            <person name="Oyono L."/>
            <person name="Patti C."/>
            <person name="Perrin D."/>
            <person name="Phunkhang P."/>
            <person name="Pierre F."/>
            <person name="Priest M."/>
            <person name="Rachupka A."/>
            <person name="Raghuraman S."/>
            <person name="Rameau R."/>
            <person name="Ray V."/>
            <person name="Raymond C."/>
            <person name="Rege F."/>
            <person name="Rise C."/>
            <person name="Rogers J."/>
            <person name="Rogov P."/>
            <person name="Sahalie J."/>
            <person name="Settipalli S."/>
            <person name="Sharpe T."/>
            <person name="Shea T."/>
            <person name="Sheehan M."/>
            <person name="Sherpa N."/>
            <person name="Shi J."/>
            <person name="Shih D."/>
            <person name="Sloan J."/>
            <person name="Smith C."/>
            <person name="Sparrow T."/>
            <person name="Stalker J."/>
            <person name="Stange-Thomann N."/>
            <person name="Stavropoulos S."/>
            <person name="Stone C."/>
            <person name="Stone S."/>
            <person name="Sykes S."/>
            <person name="Tchuinga P."/>
            <person name="Tenzing P."/>
            <person name="Tesfaye S."/>
            <person name="Thoulutsang D."/>
            <person name="Thoulutsang Y."/>
            <person name="Topham K."/>
            <person name="Topping I."/>
            <person name="Tsamla T."/>
            <person name="Vassiliev H."/>
            <person name="Venkataraman V."/>
            <person name="Vo A."/>
            <person name="Wangchuk T."/>
            <person name="Wangdi T."/>
            <person name="Weiand M."/>
            <person name="Wilkinson J."/>
            <person name="Wilson A."/>
            <person name="Yadav S."/>
            <person name="Yang S."/>
            <person name="Yang X."/>
            <person name="Young G."/>
            <person name="Yu Q."/>
            <person name="Zainoun J."/>
            <person name="Zembek L."/>
            <person name="Zimmer A."/>
            <person name="Lander E.S."/>
        </authorList>
    </citation>
    <scope>NUCLEOTIDE SEQUENCE [LARGE SCALE GENOMIC DNA]</scope>
    <source>
        <strain>Boxer</strain>
    </source>
</reference>
<reference key="2">
    <citation type="journal article" date="2000" name="Traffic">
        <title>Both calmodulin and the unconventional myosin Myr4 regulate membrane trafficking along the recycling pathway of MDCK cells.</title>
        <authorList>
            <person name="Huber L.A."/>
            <person name="Fialka I."/>
            <person name="Paiha K."/>
            <person name="Hunziker W."/>
            <person name="Sacks D.B."/>
            <person name="Baehler M."/>
            <person name="Way M."/>
            <person name="Gagescu R."/>
            <person name="Gruenberg J."/>
        </authorList>
    </citation>
    <scope>FUNCTION</scope>
    <scope>SUBCELLULAR LOCATION</scope>
    <scope>INTERACTION WITH CALMODULIN</scope>
</reference>
<keyword id="KW-0007">Acetylation</keyword>
<keyword id="KW-0009">Actin-binding</keyword>
<keyword id="KW-0067">ATP-binding</keyword>
<keyword id="KW-0112">Calmodulin-binding</keyword>
<keyword id="KW-0966">Cell projection</keyword>
<keyword id="KW-0963">Cytoplasm</keyword>
<keyword id="KW-0254">Endocytosis</keyword>
<keyword id="KW-0967">Endosome</keyword>
<keyword id="KW-0505">Motor protein</keyword>
<keyword id="KW-0518">Myosin</keyword>
<keyword id="KW-0547">Nucleotide-binding</keyword>
<keyword id="KW-0597">Phosphoprotein</keyword>
<keyword id="KW-0653">Protein transport</keyword>
<keyword id="KW-1185">Reference proteome</keyword>
<keyword id="KW-0677">Repeat</keyword>
<keyword id="KW-0813">Transport</keyword>
<organism evidence="10">
    <name type="scientific">Canis lupus familiaris</name>
    <name type="common">Dog</name>
    <name type="synonym">Canis familiaris</name>
    <dbReference type="NCBI Taxonomy" id="9615"/>
    <lineage>
        <taxon>Eukaryota</taxon>
        <taxon>Metazoa</taxon>
        <taxon>Chordata</taxon>
        <taxon>Craniata</taxon>
        <taxon>Vertebrata</taxon>
        <taxon>Euteleostomi</taxon>
        <taxon>Mammalia</taxon>
        <taxon>Eutheria</taxon>
        <taxon>Laurasiatheria</taxon>
        <taxon>Carnivora</taxon>
        <taxon>Caniformia</taxon>
        <taxon>Canidae</taxon>
        <taxon>Canis</taxon>
    </lineage>
</organism>
<gene>
    <name type="primary">MYO1D</name>
</gene>
<evidence type="ECO:0000250" key="1">
    <source>
        <dbReference type="UniProtKB" id="O94832"/>
    </source>
</evidence>
<evidence type="ECO:0000250" key="2">
    <source>
        <dbReference type="UniProtKB" id="Q5SYD0"/>
    </source>
</evidence>
<evidence type="ECO:0000250" key="3">
    <source>
        <dbReference type="UniProtKB" id="Q63357"/>
    </source>
</evidence>
<evidence type="ECO:0000255" key="4">
    <source>
        <dbReference type="PROSITE-ProRule" id="PRU00116"/>
    </source>
</evidence>
<evidence type="ECO:0000255" key="5">
    <source>
        <dbReference type="PROSITE-ProRule" id="PRU00782"/>
    </source>
</evidence>
<evidence type="ECO:0000255" key="6">
    <source>
        <dbReference type="PROSITE-ProRule" id="PRU01093"/>
    </source>
</evidence>
<evidence type="ECO:0000269" key="7">
    <source>
    </source>
</evidence>
<evidence type="ECO:0000303" key="8">
    <source>
    </source>
</evidence>
<evidence type="ECO:0000305" key="9"/>
<evidence type="ECO:0000312" key="10">
    <source>
        <dbReference type="Proteomes" id="UP000002254"/>
    </source>
</evidence>
<name>MYO1D_CANLF</name>
<proteinExistence type="evidence at protein level"/>
<comment type="function">
    <text evidence="3 7">Unconventional myosin that functions as actin-based motor protein with ATPase activity (By similarity). Plays a role in endosomal protein trafficking, and especially in the transfer of cargo proteins from early to recycling endosomes (PubMed:11208135). Required for normal planar cell polarity in ciliated tracheal cells, for normal rotational polarity of cilia, and for coordinated, unidirectional ciliary movement in the trachea. Required for normal, polarized cilia organization in brain ependymal epithelial cells (By similarity).</text>
</comment>
<comment type="subunit">
    <text evidence="3 7">Interacts (via the two IQ motifs) with calmodulin (PubMed:11208135). Binds an additional calmodulin chain via a third, C-terminal region. Interacts with F-actin (By similarity).</text>
</comment>
<comment type="subcellular location">
    <subcellularLocation>
        <location evidence="3">Cytoplasm</location>
    </subcellularLocation>
    <subcellularLocation>
        <location evidence="3">Perikaryon</location>
    </subcellularLocation>
    <subcellularLocation>
        <location evidence="3">Cell projection</location>
        <location evidence="3">Dendrite</location>
    </subcellularLocation>
    <subcellularLocation>
        <location evidence="7">Early endosome</location>
    </subcellularLocation>
    <subcellularLocation>
        <location evidence="7">Cytoplasm</location>
        <location evidence="7">Cell cortex</location>
    </subcellularLocation>
    <text evidence="3 7">Colocalizes with the actin cytoskeleton in the cell cortex close to the apical cell membrane (PubMed:11208135). Colocalizes with cytoplasmic puncta that are reminiscent of transport vesicles (By similarity).</text>
</comment>
<comment type="domain">
    <text evidence="3">Binds a calmodulin chain via each of the two IQ domains. IQ domain 1 mediates interaction with calmodulin both in the presence and in the absence of Ca(2+). IQ domain 2 mediates interaction with calmodulin in the presence of Ca(2+).</text>
</comment>
<comment type="domain">
    <text evidence="3">The TH1 domain is required for activity in complementing zebrafish defects in Kupffer's vesicle lumen size.</text>
</comment>
<comment type="similarity">
    <text evidence="5">Belongs to the TRAFAC class myosin-kinesin ATPase superfamily. Myosin family.</text>
</comment>
<comment type="caution">
    <text evidence="3">Contrary to the situation in zebrafish, xenopus and drosophila, mammalian MYO1D defects have no effects on left-right body asymmetry.</text>
</comment>
<comment type="caution">
    <text evidence="9">Represents an unconventional myosin. This protein should not be confused with the conventional myosin-1 (MYH1).</text>
</comment>